<sequence>MVVPFKNEPGIDFSVQTNVERFNEELRKVKAQLGQDIPLVINGEKLTKTDTFNSVNPANTSQLIAKVSKATQDDIEKAFESANHAYQSWKKWSHKDRAELLLRVAAIIRRRKEEISAIMVYEAGKPWDEAVGDAAEGIDFIEYYARSMMELADGKPVLDREGEHNRYFYKPIGTGVTIPPWNFPFAIMAGTTLAPVVAGNTVLLKPAEDTVLTAYKLMEILEEAGLPQGVVNFVPGDPKEIGDYLVDHKDTHFVTFTGSRATGTRIYERSAVVQEGQQFLKRVIAEMGGKDAIVVDNNVDTDLAAEAIVTSAFGFSGQKCSACSRAIVHQDVHDEILEKAIQLTQKLTLGNTEENTFMGPVINQKQFDKIKNYIEIGKKEGKLETGGGTDDSTGYFIEPTIFSGLQSADRIMQEEIFGPVVGFIKVKDFDEAIEVANDTDYGLTGAVITNHREHWIKAVNEFDVGNLYLNRGCTAAVVGYHPFGGFKMSGTDAKTGSPDYLLNFLEQKVVSEMF</sequence>
<accession>Q8CN04</accession>
<comment type="catalytic activity">
    <reaction evidence="1">
        <text>L-glutamate 5-semialdehyde + NAD(+) + H2O = L-glutamate + NADH + 2 H(+)</text>
        <dbReference type="Rhea" id="RHEA:30235"/>
        <dbReference type="ChEBI" id="CHEBI:15377"/>
        <dbReference type="ChEBI" id="CHEBI:15378"/>
        <dbReference type="ChEBI" id="CHEBI:29985"/>
        <dbReference type="ChEBI" id="CHEBI:57540"/>
        <dbReference type="ChEBI" id="CHEBI:57945"/>
        <dbReference type="ChEBI" id="CHEBI:58066"/>
        <dbReference type="EC" id="1.2.1.88"/>
    </reaction>
</comment>
<comment type="pathway">
    <text evidence="1">Amino-acid degradation; L-proline degradation into L-glutamate; L-glutamate from L-proline: step 2/2.</text>
</comment>
<comment type="similarity">
    <text evidence="1">Belongs to the aldehyde dehydrogenase family. RocA subfamily.</text>
</comment>
<gene>
    <name evidence="1" type="primary">rocA</name>
    <name type="ordered locus">SE_2116</name>
</gene>
<proteinExistence type="inferred from homology"/>
<protein>
    <recommendedName>
        <fullName evidence="1">1-pyrroline-5-carboxylate dehydrogenase</fullName>
        <shortName evidence="1">P5C dehydrogenase</shortName>
        <ecNumber evidence="1">1.2.1.88</ecNumber>
    </recommendedName>
    <alternativeName>
        <fullName evidence="1">L-glutamate gamma-semialdehyde dehydrogenase</fullName>
    </alternativeName>
</protein>
<name>ROCA_STAES</name>
<dbReference type="EC" id="1.2.1.88" evidence="1"/>
<dbReference type="EMBL" id="AE015929">
    <property type="protein sequence ID" value="AAO05758.1"/>
    <property type="molecule type" value="Genomic_DNA"/>
</dbReference>
<dbReference type="RefSeq" id="NP_765671.1">
    <property type="nucleotide sequence ID" value="NC_004461.1"/>
</dbReference>
<dbReference type="SMR" id="Q8CN04"/>
<dbReference type="KEGG" id="sep:SE_2116"/>
<dbReference type="PATRIC" id="fig|176280.10.peg.2067"/>
<dbReference type="eggNOG" id="COG1012">
    <property type="taxonomic scope" value="Bacteria"/>
</dbReference>
<dbReference type="HOGENOM" id="CLU_005391_0_0_9"/>
<dbReference type="OrthoDB" id="9762913at2"/>
<dbReference type="UniPathway" id="UPA00261">
    <property type="reaction ID" value="UER00374"/>
</dbReference>
<dbReference type="Proteomes" id="UP000001411">
    <property type="component" value="Chromosome"/>
</dbReference>
<dbReference type="GO" id="GO:0009898">
    <property type="term" value="C:cytoplasmic side of plasma membrane"/>
    <property type="evidence" value="ECO:0007669"/>
    <property type="project" value="TreeGrafter"/>
</dbReference>
<dbReference type="GO" id="GO:0003842">
    <property type="term" value="F:1-pyrroline-5-carboxylate dehydrogenase activity"/>
    <property type="evidence" value="ECO:0007669"/>
    <property type="project" value="UniProtKB-UniRule"/>
</dbReference>
<dbReference type="GO" id="GO:0006537">
    <property type="term" value="P:glutamate biosynthetic process"/>
    <property type="evidence" value="ECO:0007669"/>
    <property type="project" value="UniProtKB-UniRule"/>
</dbReference>
<dbReference type="GO" id="GO:0010133">
    <property type="term" value="P:proline catabolic process to glutamate"/>
    <property type="evidence" value="ECO:0007669"/>
    <property type="project" value="UniProtKB-UniPathway"/>
</dbReference>
<dbReference type="CDD" id="cd07124">
    <property type="entry name" value="ALDH_PutA-P5CDH-RocA"/>
    <property type="match status" value="1"/>
</dbReference>
<dbReference type="FunFam" id="3.40.309.10:FF:000005">
    <property type="entry name" value="1-pyrroline-5-carboxylate dehydrogenase 1"/>
    <property type="match status" value="1"/>
</dbReference>
<dbReference type="FunFam" id="3.40.605.10:FF:000045">
    <property type="entry name" value="1-pyrroline-5-carboxylate dehydrogenase 1"/>
    <property type="match status" value="1"/>
</dbReference>
<dbReference type="Gene3D" id="3.40.605.10">
    <property type="entry name" value="Aldehyde Dehydrogenase, Chain A, domain 1"/>
    <property type="match status" value="1"/>
</dbReference>
<dbReference type="Gene3D" id="3.40.309.10">
    <property type="entry name" value="Aldehyde Dehydrogenase, Chain A, domain 2"/>
    <property type="match status" value="1"/>
</dbReference>
<dbReference type="HAMAP" id="MF_00733">
    <property type="entry name" value="RocA"/>
    <property type="match status" value="1"/>
</dbReference>
<dbReference type="InterPro" id="IPR016161">
    <property type="entry name" value="Ald_DH/histidinol_DH"/>
</dbReference>
<dbReference type="InterPro" id="IPR016163">
    <property type="entry name" value="Ald_DH_C"/>
</dbReference>
<dbReference type="InterPro" id="IPR016160">
    <property type="entry name" value="Ald_DH_CS_CYS"/>
</dbReference>
<dbReference type="InterPro" id="IPR029510">
    <property type="entry name" value="Ald_DH_CS_GLU"/>
</dbReference>
<dbReference type="InterPro" id="IPR016162">
    <property type="entry name" value="Ald_DH_N"/>
</dbReference>
<dbReference type="InterPro" id="IPR015590">
    <property type="entry name" value="Aldehyde_DH_dom"/>
</dbReference>
<dbReference type="InterPro" id="IPR050485">
    <property type="entry name" value="Proline_metab_enzyme"/>
</dbReference>
<dbReference type="InterPro" id="IPR005932">
    <property type="entry name" value="RocA"/>
</dbReference>
<dbReference type="InterPro" id="IPR047597">
    <property type="entry name" value="RocA_bacillales"/>
</dbReference>
<dbReference type="NCBIfam" id="TIGR01237">
    <property type="entry name" value="D1pyr5carbox2"/>
    <property type="match status" value="1"/>
</dbReference>
<dbReference type="NCBIfam" id="NF002852">
    <property type="entry name" value="PRK03137.1"/>
    <property type="match status" value="1"/>
</dbReference>
<dbReference type="PANTHER" id="PTHR42862">
    <property type="entry name" value="DELTA-1-PYRROLINE-5-CARBOXYLATE DEHYDROGENASE 1, ISOFORM A-RELATED"/>
    <property type="match status" value="1"/>
</dbReference>
<dbReference type="PANTHER" id="PTHR42862:SF1">
    <property type="entry name" value="DELTA-1-PYRROLINE-5-CARBOXYLATE DEHYDROGENASE 2, ISOFORM A-RELATED"/>
    <property type="match status" value="1"/>
</dbReference>
<dbReference type="Pfam" id="PF00171">
    <property type="entry name" value="Aldedh"/>
    <property type="match status" value="1"/>
</dbReference>
<dbReference type="SUPFAM" id="SSF53720">
    <property type="entry name" value="ALDH-like"/>
    <property type="match status" value="1"/>
</dbReference>
<dbReference type="PROSITE" id="PS00070">
    <property type="entry name" value="ALDEHYDE_DEHYDR_CYS"/>
    <property type="match status" value="1"/>
</dbReference>
<dbReference type="PROSITE" id="PS00687">
    <property type="entry name" value="ALDEHYDE_DEHYDR_GLU"/>
    <property type="match status" value="1"/>
</dbReference>
<evidence type="ECO:0000255" key="1">
    <source>
        <dbReference type="HAMAP-Rule" id="MF_00733"/>
    </source>
</evidence>
<reference key="1">
    <citation type="journal article" date="2003" name="Mol. Microbiol.">
        <title>Genome-based analysis of virulence genes in a non-biofilm-forming Staphylococcus epidermidis strain (ATCC 12228).</title>
        <authorList>
            <person name="Zhang Y.-Q."/>
            <person name="Ren S.-X."/>
            <person name="Li H.-L."/>
            <person name="Wang Y.-X."/>
            <person name="Fu G."/>
            <person name="Yang J."/>
            <person name="Qin Z.-Q."/>
            <person name="Miao Y.-G."/>
            <person name="Wang W.-Y."/>
            <person name="Chen R.-S."/>
            <person name="Shen Y."/>
            <person name="Chen Z."/>
            <person name="Yuan Z.-H."/>
            <person name="Zhao G.-P."/>
            <person name="Qu D."/>
            <person name="Danchin A."/>
            <person name="Wen Y.-M."/>
        </authorList>
    </citation>
    <scope>NUCLEOTIDE SEQUENCE [LARGE SCALE GENOMIC DNA]</scope>
    <source>
        <strain>ATCC 12228 / FDA PCI 1200</strain>
    </source>
</reference>
<organism>
    <name type="scientific">Staphylococcus epidermidis (strain ATCC 12228 / FDA PCI 1200)</name>
    <dbReference type="NCBI Taxonomy" id="176280"/>
    <lineage>
        <taxon>Bacteria</taxon>
        <taxon>Bacillati</taxon>
        <taxon>Bacillota</taxon>
        <taxon>Bacilli</taxon>
        <taxon>Bacillales</taxon>
        <taxon>Staphylococcaceae</taxon>
        <taxon>Staphylococcus</taxon>
    </lineage>
</organism>
<feature type="chain" id="PRO_0000056520" description="1-pyrroline-5-carboxylate dehydrogenase">
    <location>
        <begin position="1"/>
        <end position="514"/>
    </location>
</feature>
<feature type="active site" evidence="1">
    <location>
        <position position="286"/>
    </location>
</feature>
<feature type="active site" evidence="1">
    <location>
        <position position="320"/>
    </location>
</feature>
<keyword id="KW-0520">NAD</keyword>
<keyword id="KW-0560">Oxidoreductase</keyword>